<reference key="1">
    <citation type="journal article" date="1984" name="Biochem. J.">
        <title>DNA sequence around the Escherichia coli unc operon. Completion of the sequence of a 17 kilobase segment containing asnA, oriC, unc, glmS and phoS.</title>
        <authorList>
            <person name="Walker J.E."/>
            <person name="Gay N.J."/>
            <person name="Saraste M."/>
            <person name="Eberle A.N."/>
        </authorList>
    </citation>
    <scope>NUCLEOTIDE SEQUENCE [GENOMIC DNA]</scope>
</reference>
<reference key="2">
    <citation type="journal article" date="1981" name="Nucleic Acids Res.">
        <title>The atp operon: nucleotide sequence of the promoter and the genes for the membrane proteins, and the delta subunit of Escherichia coli ATP-synthase.</title>
        <authorList>
            <person name="Gay N.J."/>
            <person name="Walker J.E."/>
        </authorList>
    </citation>
    <scope>NUCLEOTIDE SEQUENCE [GENOMIC DNA]</scope>
</reference>
<reference key="3">
    <citation type="journal article" date="1981" name="Biochem. Biophys. Res. Commun.">
        <title>Nucleotide sequence of the genes for F0 components of the proton-translocating ATPase from Escherichia coli: prediction of the primary structure of F0 subunits.</title>
        <authorList>
            <person name="Kanazawa H."/>
            <person name="Mabuchi K."/>
            <person name="Kayano T."/>
            <person name="Noumi T."/>
            <person name="Sekiya T."/>
            <person name="Futai M."/>
        </authorList>
    </citation>
    <scope>NUCLEOTIDE SEQUENCE [GENOMIC DNA]</scope>
</reference>
<reference key="4">
    <citation type="journal article" date="1981" name="Mol. Gen. Genet.">
        <title>The nucleotide sequence of the atp genes coding for the F0 subunits a, b, c and the F1 subunit delta of the membrane bound ATP synthase of Escherichia coli.</title>
        <authorList>
            <person name="Nielsen J."/>
            <person name="Hansen F.G."/>
            <person name="Hoppe J."/>
            <person name="Friedl P."/>
            <person name="von Meyenburg K."/>
        </authorList>
    </citation>
    <scope>NUCLEOTIDE SEQUENCE [GENOMIC DNA]</scope>
</reference>
<reference key="5">
    <citation type="journal article" date="1982" name="Ann. N. Y. Acad. Sci.">
        <title>Structure and function of H+-ATPase: what we have learned from Escherichia coli H+-ATPase.</title>
        <authorList>
            <person name="Kanazawa H."/>
            <person name="Futai M."/>
        </authorList>
    </citation>
    <scope>NUCLEOTIDE SEQUENCE [GENOMIC DNA]</scope>
</reference>
<reference key="6">
    <citation type="journal article" date="1985" name="J. Biol. Chem.">
        <title>Role of the b subunit of the Escherichia coli proton-translocating ATPase. A mutagenic analysis.</title>
        <authorList>
            <person name="Porter A.C.G."/>
            <person name="Kumamoto C."/>
            <person name="Aldape K."/>
            <person name="Simoni R.D."/>
        </authorList>
    </citation>
    <scope>NUCLEOTIDE SEQUENCE [GENOMIC DNA]</scope>
</reference>
<reference key="7">
    <citation type="journal article" date="1993" name="Genomics">
        <title>DNA sequence and analysis of 136 kilobases of the Escherichia coli genome: organizational symmetry around the origin of replication.</title>
        <authorList>
            <person name="Burland V.D."/>
            <person name="Plunkett G. III"/>
            <person name="Daniels D.L."/>
            <person name="Blattner F.R."/>
        </authorList>
    </citation>
    <scope>NUCLEOTIDE SEQUENCE [LARGE SCALE GENOMIC DNA]</scope>
    <source>
        <strain>K12 / MG1655 / ATCC 47076</strain>
    </source>
</reference>
<reference key="8">
    <citation type="journal article" date="1997" name="Science">
        <title>The complete genome sequence of Escherichia coli K-12.</title>
        <authorList>
            <person name="Blattner F.R."/>
            <person name="Plunkett G. III"/>
            <person name="Bloch C.A."/>
            <person name="Perna N.T."/>
            <person name="Burland V."/>
            <person name="Riley M."/>
            <person name="Collado-Vides J."/>
            <person name="Glasner J.D."/>
            <person name="Rode C.K."/>
            <person name="Mayhew G.F."/>
            <person name="Gregor J."/>
            <person name="Davis N.W."/>
            <person name="Kirkpatrick H.A."/>
            <person name="Goeden M.A."/>
            <person name="Rose D.J."/>
            <person name="Mau B."/>
            <person name="Shao Y."/>
        </authorList>
    </citation>
    <scope>NUCLEOTIDE SEQUENCE [LARGE SCALE GENOMIC DNA]</scope>
    <source>
        <strain>K12 / MG1655 / ATCC 47076</strain>
    </source>
</reference>
<reference key="9">
    <citation type="journal article" date="2006" name="Mol. Syst. Biol.">
        <title>Highly accurate genome sequences of Escherichia coli K-12 strains MG1655 and W3110.</title>
        <authorList>
            <person name="Hayashi K."/>
            <person name="Morooka N."/>
            <person name="Yamamoto Y."/>
            <person name="Fujita K."/>
            <person name="Isono K."/>
            <person name="Choi S."/>
            <person name="Ohtsubo E."/>
            <person name="Baba T."/>
            <person name="Wanner B.L."/>
            <person name="Mori H."/>
            <person name="Horiuchi T."/>
        </authorList>
    </citation>
    <scope>NUCLEOTIDE SEQUENCE [LARGE SCALE GENOMIC DNA]</scope>
    <source>
        <strain>K12 / W3110 / ATCC 27325 / DSM 5911</strain>
    </source>
</reference>
<reference key="10">
    <citation type="journal article" date="1981" name="Biochem. Biophys. Res. Commun.">
        <title>Nucleotide sequence of the gene coding for the delta subunit of proton translocating ATPase of Escherichia coli.</title>
        <authorList>
            <person name="Mabuchi K."/>
            <person name="Kanazawa H."/>
            <person name="Kayano T."/>
            <person name="Futai M."/>
        </authorList>
    </citation>
    <scope>NUCLEOTIDE SEQUENCE [GENOMIC DNA] OF 132-156</scope>
</reference>
<reference key="11">
    <citation type="journal article" date="1991" name="J. Bacteriol.">
        <title>Targeted mutagenesis of the b subunit of F1F0 ATP synthase in Escherichia coli: Glu-77 through Gln-85.</title>
        <authorList>
            <person name="McCormick K.A."/>
            <person name="Cain B.D."/>
        </authorList>
    </citation>
    <scope>FUNCTION</scope>
</reference>
<reference key="12">
    <citation type="journal article" date="2005" name="J. Biol. Chem.">
        <title>Protein complexes of the Escherichia coli cell envelope.</title>
        <authorList>
            <person name="Stenberg F."/>
            <person name="Chovanec P."/>
            <person name="Maslen S.L."/>
            <person name="Robinson C.V."/>
            <person name="Ilag L."/>
            <person name="von Heijne G."/>
            <person name="Daley D.O."/>
        </authorList>
    </citation>
    <scope>SUBUNIT</scope>
    <scope>SUBCELLULAR LOCATION</scope>
    <source>
        <strain>BL21-DE3</strain>
    </source>
</reference>
<reference key="13">
    <citation type="journal article" date="1999" name="J. Biol. Chem.">
        <title>Structure of the membrane domain of subunit b of the Escherichia coli F0F1 ATP synthase.</title>
        <authorList>
            <person name="Dmitriev O."/>
            <person name="Jones P.C."/>
            <person name="Jiang W."/>
            <person name="Fillingame R.H."/>
        </authorList>
    </citation>
    <scope>STRUCTURE BY NMR OF 1-34</scope>
</reference>
<accession>P0ABA0</accession>
<accession>P00859</accession>
<accession>Q2M854</accession>
<keyword id="KW-0002">3D-structure</keyword>
<keyword id="KW-0066">ATP synthesis</keyword>
<keyword id="KW-0997">Cell inner membrane</keyword>
<keyword id="KW-1003">Cell membrane</keyword>
<keyword id="KW-0138">CF(0)</keyword>
<keyword id="KW-0375">Hydrogen ion transport</keyword>
<keyword id="KW-0406">Ion transport</keyword>
<keyword id="KW-0472">Membrane</keyword>
<keyword id="KW-1185">Reference proteome</keyword>
<keyword id="KW-0812">Transmembrane</keyword>
<keyword id="KW-1133">Transmembrane helix</keyword>
<keyword id="KW-0813">Transport</keyword>
<dbReference type="EMBL" id="J01594">
    <property type="protein sequence ID" value="AAA24733.1"/>
    <property type="molecule type" value="Genomic_DNA"/>
</dbReference>
<dbReference type="EMBL" id="X01631">
    <property type="protein sequence ID" value="CAA25778.1"/>
    <property type="molecule type" value="Genomic_DNA"/>
</dbReference>
<dbReference type="EMBL" id="V00264">
    <property type="protein sequence ID" value="CAA23516.1"/>
    <property type="molecule type" value="Genomic_DNA"/>
</dbReference>
<dbReference type="EMBL" id="V00310">
    <property type="protein sequence ID" value="CAA23592.1"/>
    <property type="molecule type" value="Genomic_DNA"/>
</dbReference>
<dbReference type="EMBL" id="V00266">
    <property type="protein sequence ID" value="CAA23523.1"/>
    <property type="molecule type" value="Genomic_DNA"/>
</dbReference>
<dbReference type="EMBL" id="M25464">
    <property type="protein sequence ID" value="AAA83871.1"/>
    <property type="molecule type" value="Genomic_DNA"/>
</dbReference>
<dbReference type="EMBL" id="M10422">
    <property type="protein sequence ID" value="AAA24741.1"/>
    <property type="molecule type" value="Genomic_DNA"/>
</dbReference>
<dbReference type="EMBL" id="L10328">
    <property type="protein sequence ID" value="AAA62088.1"/>
    <property type="molecule type" value="Genomic_DNA"/>
</dbReference>
<dbReference type="EMBL" id="U00096">
    <property type="protein sequence ID" value="AAC76759.1"/>
    <property type="molecule type" value="Genomic_DNA"/>
</dbReference>
<dbReference type="EMBL" id="AP009048">
    <property type="protein sequence ID" value="BAE77552.1"/>
    <property type="molecule type" value="Genomic_DNA"/>
</dbReference>
<dbReference type="EMBL" id="M12212">
    <property type="protein sequence ID" value="AAA20043.1"/>
    <property type="molecule type" value="Unassigned_DNA"/>
</dbReference>
<dbReference type="PIR" id="D93732">
    <property type="entry name" value="LWECB"/>
</dbReference>
<dbReference type="RefSeq" id="NP_418192.1">
    <property type="nucleotide sequence ID" value="NC_000913.3"/>
</dbReference>
<dbReference type="RefSeq" id="WP_001052219.1">
    <property type="nucleotide sequence ID" value="NZ_STEB01000015.1"/>
</dbReference>
<dbReference type="PDB" id="1B9U">
    <property type="method" value="NMR"/>
    <property type="chains" value="A=1-34"/>
</dbReference>
<dbReference type="PDB" id="1L2P">
    <property type="method" value="X-ray"/>
    <property type="resolution" value="1.55 A"/>
    <property type="chains" value="A=62-122"/>
</dbReference>
<dbReference type="PDB" id="2KHK">
    <property type="method" value="NMR"/>
    <property type="chains" value="A=30-82"/>
</dbReference>
<dbReference type="PDB" id="5T4O">
    <property type="method" value="EM"/>
    <property type="resolution" value="6.90 A"/>
    <property type="chains" value="I/J=2-156"/>
</dbReference>
<dbReference type="PDB" id="5T4P">
    <property type="method" value="EM"/>
    <property type="resolution" value="7.77 A"/>
    <property type="chains" value="I/J=2-156"/>
</dbReference>
<dbReference type="PDB" id="5T4Q">
    <property type="method" value="EM"/>
    <property type="resolution" value="8.53 A"/>
    <property type="chains" value="I/J=2-156"/>
</dbReference>
<dbReference type="PDB" id="6OQR">
    <property type="method" value="EM"/>
    <property type="resolution" value="3.10 A"/>
    <property type="chains" value="X/Y=1-156"/>
</dbReference>
<dbReference type="PDB" id="6OQS">
    <property type="method" value="EM"/>
    <property type="resolution" value="3.30 A"/>
    <property type="chains" value="X/Y=1-156"/>
</dbReference>
<dbReference type="PDB" id="6OQT">
    <property type="method" value="EM"/>
    <property type="resolution" value="3.10 A"/>
    <property type="chains" value="X/Y=1-156"/>
</dbReference>
<dbReference type="PDB" id="6OQU">
    <property type="method" value="EM"/>
    <property type="resolution" value="3.20 A"/>
    <property type="chains" value="X/Y=1-156"/>
</dbReference>
<dbReference type="PDB" id="6OQV">
    <property type="method" value="EM"/>
    <property type="resolution" value="3.30 A"/>
    <property type="chains" value="X/Y=1-156"/>
</dbReference>
<dbReference type="PDB" id="6OQW">
    <property type="method" value="EM"/>
    <property type="resolution" value="3.10 A"/>
    <property type="chains" value="X/Y=1-156"/>
</dbReference>
<dbReference type="PDB" id="6PQV">
    <property type="method" value="EM"/>
    <property type="resolution" value="3.30 A"/>
    <property type="chains" value="X/Y=1-156"/>
</dbReference>
<dbReference type="PDB" id="6VWK">
    <property type="method" value="EM"/>
    <property type="resolution" value="3.30 A"/>
    <property type="chains" value="X/Y=1-156"/>
</dbReference>
<dbReference type="PDB" id="6WNQ">
    <property type="method" value="EM"/>
    <property type="resolution" value="3.40 A"/>
    <property type="chains" value="X/Y=1-156"/>
</dbReference>
<dbReference type="PDB" id="6WNR">
    <property type="method" value="EM"/>
    <property type="resolution" value="3.30 A"/>
    <property type="chains" value="X/Y=1-156"/>
</dbReference>
<dbReference type="PDB" id="8DBP">
    <property type="method" value="EM"/>
    <property type="resolution" value="3.60 A"/>
    <property type="chains" value="X/Y=1-156"/>
</dbReference>
<dbReference type="PDB" id="8DBQ">
    <property type="method" value="EM"/>
    <property type="resolution" value="4.00 A"/>
    <property type="chains" value="X/Y=1-156"/>
</dbReference>
<dbReference type="PDB" id="8DBR">
    <property type="method" value="EM"/>
    <property type="resolution" value="3.20 A"/>
    <property type="chains" value="X/Y=1-156"/>
</dbReference>
<dbReference type="PDB" id="8DBS">
    <property type="method" value="EM"/>
    <property type="resolution" value="3.50 A"/>
    <property type="chains" value="X/Y=1-156"/>
</dbReference>
<dbReference type="PDB" id="8DBT">
    <property type="method" value="EM"/>
    <property type="resolution" value="3.10 A"/>
    <property type="chains" value="X/Y=1-156"/>
</dbReference>
<dbReference type="PDB" id="8DBU">
    <property type="method" value="EM"/>
    <property type="resolution" value="3.40 A"/>
    <property type="chains" value="X/Y=1-156"/>
</dbReference>
<dbReference type="PDB" id="8DBV">
    <property type="method" value="EM"/>
    <property type="resolution" value="3.70 A"/>
    <property type="chains" value="X/Y=1-156"/>
</dbReference>
<dbReference type="PDB" id="8DBW">
    <property type="method" value="EM"/>
    <property type="resolution" value="4.10 A"/>
    <property type="chains" value="X/Y=1-155"/>
</dbReference>
<dbReference type="PDBsum" id="1B9U"/>
<dbReference type="PDBsum" id="1L2P"/>
<dbReference type="PDBsum" id="2KHK"/>
<dbReference type="PDBsum" id="5T4O"/>
<dbReference type="PDBsum" id="5T4P"/>
<dbReference type="PDBsum" id="5T4Q"/>
<dbReference type="PDBsum" id="6OQR"/>
<dbReference type="PDBsum" id="6OQS"/>
<dbReference type="PDBsum" id="6OQT"/>
<dbReference type="PDBsum" id="6OQU"/>
<dbReference type="PDBsum" id="6OQV"/>
<dbReference type="PDBsum" id="6OQW"/>
<dbReference type="PDBsum" id="6PQV"/>
<dbReference type="PDBsum" id="6VWK"/>
<dbReference type="PDBsum" id="6WNQ"/>
<dbReference type="PDBsum" id="6WNR"/>
<dbReference type="PDBsum" id="8DBP"/>
<dbReference type="PDBsum" id="8DBQ"/>
<dbReference type="PDBsum" id="8DBR"/>
<dbReference type="PDBsum" id="8DBS"/>
<dbReference type="PDBsum" id="8DBT"/>
<dbReference type="PDBsum" id="8DBU"/>
<dbReference type="PDBsum" id="8DBV"/>
<dbReference type="PDBsum" id="8DBW"/>
<dbReference type="SMR" id="P0ABA0"/>
<dbReference type="BioGRID" id="4262109">
    <property type="interactions" value="81"/>
</dbReference>
<dbReference type="ComplexPortal" id="CPX-4022">
    <property type="entry name" value="ATP synthase complex"/>
</dbReference>
<dbReference type="DIP" id="DIP-35994N"/>
<dbReference type="FunCoup" id="P0ABA0">
    <property type="interactions" value="237"/>
</dbReference>
<dbReference type="IntAct" id="P0ABA0">
    <property type="interactions" value="2"/>
</dbReference>
<dbReference type="STRING" id="511145.b3736"/>
<dbReference type="DrugBank" id="DB03091">
    <property type="generic name" value="Isoglutamine"/>
</dbReference>
<dbReference type="TCDB" id="3.A.2.1.1">
    <property type="family name" value="the h+- or na+-translocating f-type, v-type and a-type atpase (f-atpase) superfamily"/>
</dbReference>
<dbReference type="jPOST" id="P0ABA0"/>
<dbReference type="PaxDb" id="511145-b3736"/>
<dbReference type="EnsemblBacteria" id="AAC76759">
    <property type="protein sequence ID" value="AAC76759"/>
    <property type="gene ID" value="b3736"/>
</dbReference>
<dbReference type="GeneID" id="93778231"/>
<dbReference type="GeneID" id="948247"/>
<dbReference type="KEGG" id="ecj:JW3714"/>
<dbReference type="KEGG" id="eco:b3736"/>
<dbReference type="KEGG" id="ecoc:C3026_20245"/>
<dbReference type="PATRIC" id="fig|1411691.4.peg.2964"/>
<dbReference type="EchoBASE" id="EB0101"/>
<dbReference type="eggNOG" id="COG0711">
    <property type="taxonomic scope" value="Bacteria"/>
</dbReference>
<dbReference type="HOGENOM" id="CLU_079215_4_5_6"/>
<dbReference type="InParanoid" id="P0ABA0"/>
<dbReference type="OMA" id="ILAWFTM"/>
<dbReference type="OrthoDB" id="9788020at2"/>
<dbReference type="PhylomeDB" id="P0ABA0"/>
<dbReference type="BioCyc" id="EcoCyc:ATPF-MONOMER"/>
<dbReference type="BioCyc" id="MetaCyc:ATPF-MONOMER"/>
<dbReference type="EvolutionaryTrace" id="P0ABA0"/>
<dbReference type="PRO" id="PR:P0ABA0"/>
<dbReference type="Proteomes" id="UP000000625">
    <property type="component" value="Chromosome"/>
</dbReference>
<dbReference type="GO" id="GO:0005886">
    <property type="term" value="C:plasma membrane"/>
    <property type="evidence" value="ECO:0000303"/>
    <property type="project" value="ComplexPortal"/>
</dbReference>
<dbReference type="GO" id="GO:0045259">
    <property type="term" value="C:proton-transporting ATP synthase complex"/>
    <property type="evidence" value="ECO:0000353"/>
    <property type="project" value="ComplexPortal"/>
</dbReference>
<dbReference type="GO" id="GO:0046933">
    <property type="term" value="F:proton-transporting ATP synthase activity, rotational mechanism"/>
    <property type="evidence" value="ECO:0000315"/>
    <property type="project" value="EcoCyc"/>
</dbReference>
<dbReference type="GO" id="GO:0046961">
    <property type="term" value="F:proton-transporting ATPase activity, rotational mechanism"/>
    <property type="evidence" value="ECO:0000315"/>
    <property type="project" value="EcoCyc"/>
</dbReference>
<dbReference type="GO" id="GO:0042777">
    <property type="term" value="P:proton motive force-driven plasma membrane ATP synthesis"/>
    <property type="evidence" value="ECO:0000315"/>
    <property type="project" value="ComplexPortal"/>
</dbReference>
<dbReference type="CDD" id="cd06503">
    <property type="entry name" value="ATP-synt_Fo_b"/>
    <property type="match status" value="1"/>
</dbReference>
<dbReference type="FunFam" id="1.20.5.620:FF:000001">
    <property type="entry name" value="ATP synthase subunit b"/>
    <property type="match status" value="1"/>
</dbReference>
<dbReference type="Gene3D" id="1.20.5.620">
    <property type="entry name" value="F1F0 ATP synthase subunit B, membrane domain"/>
    <property type="match status" value="1"/>
</dbReference>
<dbReference type="HAMAP" id="MF_01398">
    <property type="entry name" value="ATP_synth_b_bprime"/>
    <property type="match status" value="1"/>
</dbReference>
<dbReference type="InterPro" id="IPR028987">
    <property type="entry name" value="ATP_synth_B-like_membr_sf"/>
</dbReference>
<dbReference type="InterPro" id="IPR002146">
    <property type="entry name" value="ATP_synth_b/b'su_bac/chlpt"/>
</dbReference>
<dbReference type="InterPro" id="IPR005864">
    <property type="entry name" value="ATP_synth_F0_bsu_bac"/>
</dbReference>
<dbReference type="InterPro" id="IPR050059">
    <property type="entry name" value="ATP_synthase_B_chain"/>
</dbReference>
<dbReference type="NCBIfam" id="TIGR01144">
    <property type="entry name" value="ATP_synt_b"/>
    <property type="match status" value="1"/>
</dbReference>
<dbReference type="NCBIfam" id="NF004411">
    <property type="entry name" value="PRK05759.1-2"/>
    <property type="match status" value="1"/>
</dbReference>
<dbReference type="NCBIfam" id="NF004413">
    <property type="entry name" value="PRK05759.1-4"/>
    <property type="match status" value="1"/>
</dbReference>
<dbReference type="PANTHER" id="PTHR33445:SF1">
    <property type="entry name" value="ATP SYNTHASE SUBUNIT B"/>
    <property type="match status" value="1"/>
</dbReference>
<dbReference type="PANTHER" id="PTHR33445">
    <property type="entry name" value="ATP SYNTHASE SUBUNIT B', CHLOROPLASTIC"/>
    <property type="match status" value="1"/>
</dbReference>
<dbReference type="Pfam" id="PF00430">
    <property type="entry name" value="ATP-synt_B"/>
    <property type="match status" value="1"/>
</dbReference>
<dbReference type="SUPFAM" id="SSF81573">
    <property type="entry name" value="F1F0 ATP synthase subunit B, membrane domain"/>
    <property type="match status" value="1"/>
</dbReference>
<name>ATPF_ECOLI</name>
<protein>
    <recommendedName>
        <fullName evidence="1">ATP synthase subunit b</fullName>
    </recommendedName>
    <alternativeName>
        <fullName evidence="1">ATP synthase F(0) sector subunit b</fullName>
    </alternativeName>
    <alternativeName>
        <fullName evidence="1">ATPase subunit I</fullName>
    </alternativeName>
    <alternativeName>
        <fullName evidence="1">F-type ATPase subunit b</fullName>
        <shortName evidence="1">F-ATPase subunit b</shortName>
    </alternativeName>
</protein>
<organism>
    <name type="scientific">Escherichia coli (strain K12)</name>
    <dbReference type="NCBI Taxonomy" id="83333"/>
    <lineage>
        <taxon>Bacteria</taxon>
        <taxon>Pseudomonadati</taxon>
        <taxon>Pseudomonadota</taxon>
        <taxon>Gammaproteobacteria</taxon>
        <taxon>Enterobacterales</taxon>
        <taxon>Enterobacteriaceae</taxon>
        <taxon>Escherichia</taxon>
    </lineage>
</organism>
<sequence length="156" mass="17264">MNLNATILGQAIAFVLFVLFCMKYVWPPLMAAIEKRQKEIADGLASAERAHKDLDLAKASATDQLKKAKAEAQVIIEQANKRRSQILDEAKAEAEQERTKIVAQAQAEIEAERKRAREELRKQVAILAVAGAEKIIERSVDEAANSDIVDKLVAEL</sequence>
<evidence type="ECO:0000255" key="1">
    <source>
        <dbReference type="HAMAP-Rule" id="MF_01398"/>
    </source>
</evidence>
<evidence type="ECO:0000305" key="2"/>
<evidence type="ECO:0007829" key="3">
    <source>
        <dbReference type="PDB" id="1L2P"/>
    </source>
</evidence>
<evidence type="ECO:0007829" key="4">
    <source>
        <dbReference type="PDB" id="6OQR"/>
    </source>
</evidence>
<evidence type="ECO:0007829" key="5">
    <source>
        <dbReference type="PDB" id="6OQV"/>
    </source>
</evidence>
<gene>
    <name evidence="1" type="primary">atpF</name>
    <name type="synonym">papF</name>
    <name type="synonym">uncF</name>
    <name type="ordered locus">b3736</name>
    <name type="ordered locus">JW3714</name>
</gene>
<feature type="chain" id="PRO_0000082371" description="ATP synthase subunit b">
    <location>
        <begin position="1"/>
        <end position="156"/>
    </location>
</feature>
<feature type="transmembrane region" description="Helical" evidence="1">
    <location>
        <begin position="11"/>
        <end position="31"/>
    </location>
</feature>
<feature type="site" description="Mutation prevents the formation of a functional proton pore, but has a small effect on the binding of F(1) to F(0)">
    <location>
        <position position="9"/>
    </location>
</feature>
<feature type="site" description="Required for proton pore formation, as well as F(1) to F(0) binding">
    <location>
        <position position="131"/>
    </location>
</feature>
<feature type="sequence conflict" description="In Ref. 3; CAA23592." evidence="2" ref="3">
    <original>I</original>
    <variation>F</variation>
    <location>
        <position position="33"/>
    </location>
</feature>
<feature type="sequence conflict" description="In Ref. 7; AAA24741." evidence="2" ref="7">
    <original>T</original>
    <variation>N</variation>
    <location>
        <position position="62"/>
    </location>
</feature>
<feature type="sequence conflict" description="In Ref. 3; CAA23592." evidence="2" ref="3">
    <original>A</original>
    <variation>D</variation>
    <location>
        <position position="72"/>
    </location>
</feature>
<feature type="helix" evidence="4">
    <location>
        <begin position="6"/>
        <end position="24"/>
    </location>
</feature>
<feature type="helix" evidence="5">
    <location>
        <begin position="26"/>
        <end position="41"/>
    </location>
</feature>
<feature type="helix" evidence="5">
    <location>
        <begin position="44"/>
        <end position="48"/>
    </location>
</feature>
<feature type="helix" evidence="3">
    <location>
        <begin position="63"/>
        <end position="120"/>
    </location>
</feature>
<feature type="strand" evidence="4">
    <location>
        <begin position="136"/>
        <end position="138"/>
    </location>
</feature>
<feature type="helix" evidence="4">
    <location>
        <begin position="143"/>
        <end position="145"/>
    </location>
</feature>
<feature type="helix" evidence="4">
    <location>
        <begin position="146"/>
        <end position="154"/>
    </location>
</feature>
<comment type="function">
    <text evidence="1">F(1)F(0) ATP synthase produces ATP from ADP in the presence of a proton or sodium gradient. F-type ATPases consist of two structural domains, F(1) containing the extramembraneous catalytic core and F(0) containing the membrane proton channel, linked together by a central stalk and a peripheral stalk. During catalysis, ATP synthesis in the catalytic domain of F(1) is coupled via a rotary mechanism of the central stalk subunits to proton translocation.</text>
</comment>
<comment type="function">
    <text evidence="1">Component of the F(0) channel, it forms part of the peripheral stalk, linking F(1) to F(0).</text>
</comment>
<comment type="subunit">
    <text evidence="1">F-type ATPases have 2 components, F(1) - the catalytic core - and F(0) - the membrane proton channel. F(1) has five subunits: alpha(3), beta(3), gamma(1), delta(1), epsilon(1). F(0) has three main subunits: a(1), b(2) and c(10-14). The alpha and beta chains form an alternating ring which encloses part of the gamma chain. F(1) is attached to F(0) by a central stalk formed by the gamma and epsilon chains, while a peripheral stalk is formed by the delta and b chains.</text>
</comment>
<comment type="subcellular location">
    <subcellularLocation>
        <location evidence="1">Cell inner membrane</location>
        <topology evidence="1">Single-pass membrane protein</topology>
    </subcellularLocation>
</comment>
<comment type="similarity">
    <text evidence="1">Belongs to the ATPase B chain family.</text>
</comment>
<proteinExistence type="evidence at protein level"/>